<reference key="1">
    <citation type="submission" date="2003-07" db="EMBL/GenBank/DDBJ databases">
        <authorList>
            <consortium name="NIH - Zebrafish Gene Collection (ZGC) project"/>
        </authorList>
    </citation>
    <scope>NUCLEOTIDE SEQUENCE [LARGE SCALE MRNA] (ISOFORMS 1 AND 2)</scope>
    <source>
        <tissue>Embryo</tissue>
    </source>
</reference>
<sequence length="494" mass="54040">MKSLAPGIKLITSFSRDSWYRFSILFLTFVFYTSYHLSRKPISIVKSQLHRNCSNVVHPANLNITDNDTWCDWVPFDGKNYQNLFGVLDNCFLVAYAVGMFFSGIFGERLPLRYYLSTGMLLSGLFTALFGLGFYWQIHSLWYYCLVQALNGLVQTTGWPAVVACVGNWFGKGKRGFIMGVWNSHTSVGNILGSLIAGVYVSSAWGLSFIVPGIIIASTGVICFLFLVERPEDVNCTAPQHHERVEEEPLLRNSSTNEEIFNSHTSTAVEPVEDHSEAISFCGALRIPGVVEFSLCLLFAKLVSYTFLYWLPLYIANVAHFDPKKAGDLSTLFDVGGILGGIVAGLVSDYTGGRASTCCAMLIIAAPMLFLYNKIGQNGLPTTVGMLLWCGALVNGPYALITTAVSADLGTHECLRGNSRALSTVTAIIDGTGSIGAAVGPLLAGLISPTGWNNVFYMLIAADVLACLLLSRLVYKEIRGWCGYTTRQRGFKEI</sequence>
<accession>Q7SY29</accession>
<accession>Q4V952</accession>
<feature type="chain" id="PRO_0000308324" description="Glucose-6-phosphate exchanger SLC37A2">
    <location>
        <begin position="1"/>
        <end position="494"/>
    </location>
</feature>
<feature type="transmembrane region" description="Helical" evidence="2">
    <location>
        <begin position="20"/>
        <end position="37"/>
    </location>
</feature>
<feature type="transmembrane region" description="Helical" evidence="2">
    <location>
        <begin position="85"/>
        <end position="105"/>
    </location>
</feature>
<feature type="transmembrane region" description="Helical" evidence="2">
    <location>
        <begin position="116"/>
        <end position="136"/>
    </location>
</feature>
<feature type="transmembrane region" description="Helical" evidence="2">
    <location>
        <begin position="146"/>
        <end position="166"/>
    </location>
</feature>
<feature type="transmembrane region" description="Helical" evidence="2">
    <location>
        <begin position="187"/>
        <end position="207"/>
    </location>
</feature>
<feature type="transmembrane region" description="Helical" evidence="2">
    <location>
        <begin position="208"/>
        <end position="228"/>
    </location>
</feature>
<feature type="transmembrane region" description="Helical" evidence="2">
    <location>
        <begin position="295"/>
        <end position="315"/>
    </location>
</feature>
<feature type="transmembrane region" description="Helical" evidence="2">
    <location>
        <begin position="327"/>
        <end position="347"/>
    </location>
</feature>
<feature type="transmembrane region" description="Helical" evidence="2">
    <location>
        <begin position="355"/>
        <end position="375"/>
    </location>
</feature>
<feature type="transmembrane region" description="Helical" evidence="2">
    <location>
        <begin position="384"/>
        <end position="404"/>
    </location>
</feature>
<feature type="transmembrane region" description="Helical" evidence="2">
    <location>
        <begin position="427"/>
        <end position="447"/>
    </location>
</feature>
<feature type="transmembrane region" description="Helical" evidence="2">
    <location>
        <begin position="455"/>
        <end position="475"/>
    </location>
</feature>
<feature type="glycosylation site" description="N-linked (GlcNAc...) asparagine" evidence="2">
    <location>
        <position position="52"/>
    </location>
</feature>
<feature type="glycosylation site" description="N-linked (GlcNAc...) asparagine" evidence="2">
    <location>
        <position position="63"/>
    </location>
</feature>
<feature type="glycosylation site" description="N-linked (GlcNAc...) asparagine" evidence="2">
    <location>
        <position position="67"/>
    </location>
</feature>
<feature type="splice variant" id="VSP_028965" description="In isoform 2." evidence="3">
    <location>
        <begin position="491"/>
        <end position="494"/>
    </location>
</feature>
<feature type="sequence conflict" description="In Ref. 1; AAH97056." evidence="4" ref="1">
    <original>P</original>
    <variation>L</variation>
    <location>
        <position position="381"/>
    </location>
</feature>
<feature type="sequence conflict" description="In Ref. 1; AAH97056." evidence="4" ref="1">
    <original>C</original>
    <variation>S</variation>
    <location>
        <position position="414"/>
    </location>
</feature>
<keyword id="KW-0025">Alternative splicing</keyword>
<keyword id="KW-0050">Antiport</keyword>
<keyword id="KW-0256">Endoplasmic reticulum</keyword>
<keyword id="KW-0325">Glycoprotein</keyword>
<keyword id="KW-0472">Membrane</keyword>
<keyword id="KW-1185">Reference proteome</keyword>
<keyword id="KW-0762">Sugar transport</keyword>
<keyword id="KW-0812">Transmembrane</keyword>
<keyword id="KW-1133">Transmembrane helix</keyword>
<keyword id="KW-0813">Transport</keyword>
<dbReference type="EMBL" id="BC055147">
    <property type="protein sequence ID" value="AAH55147.1"/>
    <property type="molecule type" value="mRNA"/>
</dbReference>
<dbReference type="EMBL" id="BC097056">
    <property type="protein sequence ID" value="AAH97056.1"/>
    <property type="molecule type" value="mRNA"/>
</dbReference>
<dbReference type="RefSeq" id="NP_998179.1">
    <property type="nucleotide sequence ID" value="NM_213014.1"/>
</dbReference>
<dbReference type="SMR" id="Q7SY29"/>
<dbReference type="FunCoup" id="Q7SY29">
    <property type="interactions" value="508"/>
</dbReference>
<dbReference type="STRING" id="7955.ENSDARP00000038646"/>
<dbReference type="GlyCosmos" id="Q7SY29">
    <property type="glycosylation" value="3 sites, No reported glycans"/>
</dbReference>
<dbReference type="PaxDb" id="7955-ENSDARP00000038646"/>
<dbReference type="GeneID" id="406287"/>
<dbReference type="KEGG" id="dre:406287"/>
<dbReference type="AGR" id="ZFIN:ZDB-GENE-040426-1949"/>
<dbReference type="CTD" id="219855"/>
<dbReference type="ZFIN" id="ZDB-GENE-040426-1949">
    <property type="gene designation" value="slc37a2"/>
</dbReference>
<dbReference type="eggNOG" id="KOG2533">
    <property type="taxonomic scope" value="Eukaryota"/>
</dbReference>
<dbReference type="InParanoid" id="Q7SY29"/>
<dbReference type="OrthoDB" id="3639251at2759"/>
<dbReference type="PhylomeDB" id="Q7SY29"/>
<dbReference type="Reactome" id="R-DRE-70263">
    <property type="pathway name" value="Gluconeogenesis"/>
</dbReference>
<dbReference type="PRO" id="PR:Q7SY29"/>
<dbReference type="Proteomes" id="UP000000437">
    <property type="component" value="Chromosome 5"/>
</dbReference>
<dbReference type="GO" id="GO:0005789">
    <property type="term" value="C:endoplasmic reticulum membrane"/>
    <property type="evidence" value="ECO:0000250"/>
    <property type="project" value="UniProtKB"/>
</dbReference>
<dbReference type="GO" id="GO:0061513">
    <property type="term" value="F:glucose 6-phosphate:phosphate antiporter activity"/>
    <property type="evidence" value="ECO:0000250"/>
    <property type="project" value="UniProtKB"/>
</dbReference>
<dbReference type="GO" id="GO:0015760">
    <property type="term" value="P:glucose-6-phosphate transport"/>
    <property type="evidence" value="ECO:0000250"/>
    <property type="project" value="UniProtKB"/>
</dbReference>
<dbReference type="GO" id="GO:0090382">
    <property type="term" value="P:phagosome maturation"/>
    <property type="evidence" value="ECO:0000315"/>
    <property type="project" value="ZFIN"/>
</dbReference>
<dbReference type="GO" id="GO:0035435">
    <property type="term" value="P:phosphate ion transmembrane transport"/>
    <property type="evidence" value="ECO:0000250"/>
    <property type="project" value="UniProtKB"/>
</dbReference>
<dbReference type="CDD" id="cd17344">
    <property type="entry name" value="MFS_SLC37A1_2"/>
    <property type="match status" value="1"/>
</dbReference>
<dbReference type="FunFam" id="1.20.1250.20:FF:000050">
    <property type="entry name" value="glucose-6-phosphate exchanger SLC37A2 isoform X1"/>
    <property type="match status" value="1"/>
</dbReference>
<dbReference type="FunFam" id="1.20.1250.20:FF:000028">
    <property type="entry name" value="Sugar phosphate exchanger 3 isoform 1"/>
    <property type="match status" value="1"/>
</dbReference>
<dbReference type="Gene3D" id="1.20.1250.20">
    <property type="entry name" value="MFS general substrate transporter like domains"/>
    <property type="match status" value="2"/>
</dbReference>
<dbReference type="InterPro" id="IPR011701">
    <property type="entry name" value="MFS"/>
</dbReference>
<dbReference type="InterPro" id="IPR020846">
    <property type="entry name" value="MFS_dom"/>
</dbReference>
<dbReference type="InterPro" id="IPR036259">
    <property type="entry name" value="MFS_trans_sf"/>
</dbReference>
<dbReference type="InterPro" id="IPR044740">
    <property type="entry name" value="SLC37A1_2"/>
</dbReference>
<dbReference type="InterPro" id="IPR000849">
    <property type="entry name" value="Sugar_P_transporter"/>
</dbReference>
<dbReference type="PANTHER" id="PTHR43184:SF9">
    <property type="entry name" value="GLUCOSE-6-PHOSPHATE EXCHANGER SLC37A2"/>
    <property type="match status" value="1"/>
</dbReference>
<dbReference type="PANTHER" id="PTHR43184">
    <property type="entry name" value="MAJOR FACILITATOR SUPERFAMILY TRANSPORTER 16, ISOFORM B"/>
    <property type="match status" value="1"/>
</dbReference>
<dbReference type="Pfam" id="PF07690">
    <property type="entry name" value="MFS_1"/>
    <property type="match status" value="1"/>
</dbReference>
<dbReference type="PIRSF" id="PIRSF002808">
    <property type="entry name" value="Hexose_phosphate_transp"/>
    <property type="match status" value="1"/>
</dbReference>
<dbReference type="SUPFAM" id="SSF103473">
    <property type="entry name" value="MFS general substrate transporter"/>
    <property type="match status" value="1"/>
</dbReference>
<dbReference type="PROSITE" id="PS50850">
    <property type="entry name" value="MFS"/>
    <property type="match status" value="1"/>
</dbReference>
<protein>
    <recommendedName>
        <fullName evidence="4">Glucose-6-phosphate exchanger SLC37A2</fullName>
    </recommendedName>
    <alternativeName>
        <fullName evidence="1">Solute carrier family 37 member 2</fullName>
    </alternativeName>
</protein>
<comment type="function">
    <text evidence="1">Inorganic phosphate and glucose-6-phosphate antiporter. May transport cytoplasmic glucose-6-phosphate into the lumen of the endoplasmic reticulum and translocate inorganic phosphate into the opposite direction.</text>
</comment>
<comment type="catalytic activity">
    <reaction evidence="1">
        <text>D-glucose 6-phosphate(in) + phosphate(out) = D-glucose 6-phosphate(out) + phosphate(in)</text>
        <dbReference type="Rhea" id="RHEA:71535"/>
        <dbReference type="ChEBI" id="CHEBI:43474"/>
        <dbReference type="ChEBI" id="CHEBI:61548"/>
    </reaction>
</comment>
<comment type="subcellular location">
    <subcellularLocation>
        <location evidence="1">Endoplasmic reticulum membrane</location>
        <topology evidence="2">Multi-pass membrane protein</topology>
    </subcellularLocation>
</comment>
<comment type="alternative products">
    <event type="alternative splicing"/>
    <isoform>
        <id>Q7SY29-1</id>
        <name>1</name>
        <sequence type="displayed"/>
    </isoform>
    <isoform>
        <id>Q7SY29-2</id>
        <name>2</name>
        <sequence type="described" ref="VSP_028965"/>
    </isoform>
</comment>
<comment type="similarity">
    <text evidence="4">Belongs to the major facilitator superfamily. Organophosphate:Pi antiporter (OPA) (TC 2.A.1.4) family.</text>
</comment>
<gene>
    <name evidence="1" type="primary">slc37a2</name>
    <name evidence="5" type="ORF">zgc:63583</name>
</gene>
<name>G6PT3_DANRE</name>
<proteinExistence type="evidence at transcript level"/>
<organism>
    <name type="scientific">Danio rerio</name>
    <name type="common">Zebrafish</name>
    <name type="synonym">Brachydanio rerio</name>
    <dbReference type="NCBI Taxonomy" id="7955"/>
    <lineage>
        <taxon>Eukaryota</taxon>
        <taxon>Metazoa</taxon>
        <taxon>Chordata</taxon>
        <taxon>Craniata</taxon>
        <taxon>Vertebrata</taxon>
        <taxon>Euteleostomi</taxon>
        <taxon>Actinopterygii</taxon>
        <taxon>Neopterygii</taxon>
        <taxon>Teleostei</taxon>
        <taxon>Ostariophysi</taxon>
        <taxon>Cypriniformes</taxon>
        <taxon>Danionidae</taxon>
        <taxon>Danioninae</taxon>
        <taxon>Danio</taxon>
    </lineage>
</organism>
<evidence type="ECO:0000250" key="1">
    <source>
        <dbReference type="UniProtKB" id="Q8TED4"/>
    </source>
</evidence>
<evidence type="ECO:0000255" key="2"/>
<evidence type="ECO:0000303" key="3">
    <source ref="1"/>
</evidence>
<evidence type="ECO:0000305" key="4"/>
<evidence type="ECO:0000312" key="5">
    <source>
        <dbReference type="EMBL" id="AAH55147.1"/>
    </source>
</evidence>